<proteinExistence type="evidence at protein level"/>
<accession>P63072</accession>
<accession>Q4FJZ5</accession>
<accession>Q9WV10</accession>
<sequence length="162" mass="18376">MASVRTCVVRSDQWRLMTFETTENDKVKKINEHIRSQTKVSVQDQILLLDSKILKPHRKLSSYGIDKETTIHLTLKVVKPSDEELPLFLVESKNEGQRHLLRVRRSSSVAQVKEMIESVTSVIPKKQVVNCNGKKLEDGKIMADYNIKSGSLLFLTTHCTGG</sequence>
<protein>
    <recommendedName>
        <fullName>Ubiquitin D</fullName>
    </recommendedName>
    <alternativeName>
        <fullName>Diubiquitin</fullName>
    </alternativeName>
    <alternativeName>
        <fullName evidence="1">Ubiquitin-like protein FAT10</fullName>
    </alternativeName>
</protein>
<dbReference type="EMBL" id="AF314088">
    <property type="protein sequence ID" value="AAG27477.1"/>
    <property type="molecule type" value="Genomic_DNA"/>
</dbReference>
<dbReference type="EMBL" id="AK008116">
    <property type="protein sequence ID" value="BAB25471.1"/>
    <property type="molecule type" value="mRNA"/>
</dbReference>
<dbReference type="EMBL" id="AK008552">
    <property type="protein sequence ID" value="BAB25738.1"/>
    <property type="molecule type" value="mRNA"/>
</dbReference>
<dbReference type="EMBL" id="CT010257">
    <property type="protein sequence ID" value="CAJ18465.1"/>
    <property type="molecule type" value="mRNA"/>
</dbReference>
<dbReference type="EMBL" id="AL078630">
    <property type="status" value="NOT_ANNOTATED_CDS"/>
    <property type="molecule type" value="Genomic_DNA"/>
</dbReference>
<dbReference type="EMBL" id="BC027627">
    <property type="protein sequence ID" value="AAH27627.2"/>
    <property type="molecule type" value="mRNA"/>
</dbReference>
<dbReference type="EMBL" id="BC036383">
    <property type="protein sequence ID" value="AAH36383.1"/>
    <property type="molecule type" value="mRNA"/>
</dbReference>
<dbReference type="CCDS" id="CCDS28737.1"/>
<dbReference type="RefSeq" id="NP_075626.1">
    <property type="nucleotide sequence ID" value="NM_023137.3"/>
</dbReference>
<dbReference type="SMR" id="P63072"/>
<dbReference type="BioGRID" id="204900">
    <property type="interactions" value="1"/>
</dbReference>
<dbReference type="FunCoup" id="P63072">
    <property type="interactions" value="83"/>
</dbReference>
<dbReference type="MINT" id="P63072"/>
<dbReference type="STRING" id="10090.ENSMUSP00000035808"/>
<dbReference type="iPTMnet" id="P63072"/>
<dbReference type="PhosphoSitePlus" id="P63072"/>
<dbReference type="PaxDb" id="10090-ENSMUSP00000035808"/>
<dbReference type="Antibodypedia" id="25984">
    <property type="antibodies" value="314 antibodies from 37 providers"/>
</dbReference>
<dbReference type="DNASU" id="24108"/>
<dbReference type="Ensembl" id="ENSMUST00000038844.7">
    <property type="protein sequence ID" value="ENSMUSP00000035808.7"/>
    <property type="gene ID" value="ENSMUSG00000035186.7"/>
</dbReference>
<dbReference type="GeneID" id="24108"/>
<dbReference type="KEGG" id="mmu:24108"/>
<dbReference type="UCSC" id="uc008cmi.2">
    <property type="organism name" value="mouse"/>
</dbReference>
<dbReference type="AGR" id="MGI:1344410"/>
<dbReference type="CTD" id="10537"/>
<dbReference type="MGI" id="MGI:1344410">
    <property type="gene designation" value="Ubd"/>
</dbReference>
<dbReference type="VEuPathDB" id="HostDB:ENSMUSG00000035186"/>
<dbReference type="eggNOG" id="KOG0001">
    <property type="taxonomic scope" value="Eukaryota"/>
</dbReference>
<dbReference type="GeneTree" id="ENSGT00910000144359"/>
<dbReference type="HOGENOM" id="CLU_139252_0_0_1"/>
<dbReference type="InParanoid" id="P63072"/>
<dbReference type="OMA" id="MMADYGI"/>
<dbReference type="OrthoDB" id="428577at2759"/>
<dbReference type="PhylomeDB" id="P63072"/>
<dbReference type="Reactome" id="R-MMU-8951664">
    <property type="pathway name" value="Neddylation"/>
</dbReference>
<dbReference type="BioGRID-ORCS" id="24108">
    <property type="hits" value="2 hits in 81 CRISPR screens"/>
</dbReference>
<dbReference type="ChiTaRS" id="Ubd">
    <property type="organism name" value="mouse"/>
</dbReference>
<dbReference type="PRO" id="PR:P63072"/>
<dbReference type="Proteomes" id="UP000000589">
    <property type="component" value="Chromosome 17"/>
</dbReference>
<dbReference type="RNAct" id="P63072">
    <property type="molecule type" value="protein"/>
</dbReference>
<dbReference type="Bgee" id="ENSMUSG00000035186">
    <property type="expression patterns" value="Expressed in thymus and 54 other cell types or tissues"/>
</dbReference>
<dbReference type="GO" id="GO:0016235">
    <property type="term" value="C:aggresome"/>
    <property type="evidence" value="ECO:0007669"/>
    <property type="project" value="Ensembl"/>
</dbReference>
<dbReference type="GO" id="GO:0005737">
    <property type="term" value="C:cytoplasm"/>
    <property type="evidence" value="ECO:0000314"/>
    <property type="project" value="UniProtKB"/>
</dbReference>
<dbReference type="GO" id="GO:0001650">
    <property type="term" value="C:fibrillar center"/>
    <property type="evidence" value="ECO:0007669"/>
    <property type="project" value="Ensembl"/>
</dbReference>
<dbReference type="GO" id="GO:0005654">
    <property type="term" value="C:nucleoplasm"/>
    <property type="evidence" value="ECO:0007669"/>
    <property type="project" value="Ensembl"/>
</dbReference>
<dbReference type="GO" id="GO:0005634">
    <property type="term" value="C:nucleus"/>
    <property type="evidence" value="ECO:0000314"/>
    <property type="project" value="UniProtKB"/>
</dbReference>
<dbReference type="GO" id="GO:0070628">
    <property type="term" value="F:proteasome binding"/>
    <property type="evidence" value="ECO:0000250"/>
    <property type="project" value="UniProtKB"/>
</dbReference>
<dbReference type="GO" id="GO:0070842">
    <property type="term" value="P:aggresome assembly"/>
    <property type="evidence" value="ECO:0000250"/>
    <property type="project" value="UniProtKB"/>
</dbReference>
<dbReference type="GO" id="GO:0043011">
    <property type="term" value="P:myeloid dendritic cell differentiation"/>
    <property type="evidence" value="ECO:0000250"/>
    <property type="project" value="UniProtKB"/>
</dbReference>
<dbReference type="GO" id="GO:0043065">
    <property type="term" value="P:positive regulation of apoptotic process"/>
    <property type="evidence" value="ECO:0000315"/>
    <property type="project" value="UniProtKB"/>
</dbReference>
<dbReference type="GO" id="GO:0043123">
    <property type="term" value="P:positive regulation of canonical NF-kappaB signal transduction"/>
    <property type="evidence" value="ECO:0000315"/>
    <property type="project" value="UniProtKB"/>
</dbReference>
<dbReference type="GO" id="GO:0032446">
    <property type="term" value="P:protein modification by small protein conjugation"/>
    <property type="evidence" value="ECO:0000305"/>
    <property type="project" value="UniProtKB"/>
</dbReference>
<dbReference type="GO" id="GO:0016567">
    <property type="term" value="P:protein ubiquitination"/>
    <property type="evidence" value="ECO:0000315"/>
    <property type="project" value="UniProtKB"/>
</dbReference>
<dbReference type="GO" id="GO:1901990">
    <property type="term" value="P:regulation of mitotic cell cycle phase transition"/>
    <property type="evidence" value="ECO:0000250"/>
    <property type="project" value="UniProtKB"/>
</dbReference>
<dbReference type="GO" id="GO:0034612">
    <property type="term" value="P:response to tumor necrosis factor"/>
    <property type="evidence" value="ECO:0000270"/>
    <property type="project" value="UniProtKB"/>
</dbReference>
<dbReference type="GO" id="GO:0034341">
    <property type="term" value="P:response to type II interferon"/>
    <property type="evidence" value="ECO:0000270"/>
    <property type="project" value="UniProtKB"/>
</dbReference>
<dbReference type="GO" id="GO:0006511">
    <property type="term" value="P:ubiquitin-dependent protein catabolic process"/>
    <property type="evidence" value="ECO:0000315"/>
    <property type="project" value="UniProtKB"/>
</dbReference>
<dbReference type="FunFam" id="3.10.20.90:FF:000234">
    <property type="entry name" value="Ubiquitin D"/>
    <property type="match status" value="1"/>
</dbReference>
<dbReference type="FunFam" id="3.10.20.90:FF:000249">
    <property type="entry name" value="Ubiquitin D"/>
    <property type="match status" value="1"/>
</dbReference>
<dbReference type="Gene3D" id="3.10.20.90">
    <property type="entry name" value="Phosphatidylinositol 3-kinase Catalytic Subunit, Chain A, domain 1"/>
    <property type="match status" value="2"/>
</dbReference>
<dbReference type="InterPro" id="IPR000626">
    <property type="entry name" value="Ubiquitin-like_dom"/>
</dbReference>
<dbReference type="InterPro" id="IPR029071">
    <property type="entry name" value="Ubiquitin-like_domsf"/>
</dbReference>
<dbReference type="InterPro" id="IPR042969">
    <property type="entry name" value="Ubiquitin_D"/>
</dbReference>
<dbReference type="InterPro" id="IPR019956">
    <property type="entry name" value="Ubiquitin_dom"/>
</dbReference>
<dbReference type="PANTHER" id="PTHR47731">
    <property type="entry name" value="UBIQUITIN D"/>
    <property type="match status" value="1"/>
</dbReference>
<dbReference type="PANTHER" id="PTHR47731:SF1">
    <property type="entry name" value="UBIQUITIN D"/>
    <property type="match status" value="1"/>
</dbReference>
<dbReference type="Pfam" id="PF00240">
    <property type="entry name" value="ubiquitin"/>
    <property type="match status" value="2"/>
</dbReference>
<dbReference type="PRINTS" id="PR00348">
    <property type="entry name" value="UBIQUITIN"/>
</dbReference>
<dbReference type="SMART" id="SM00213">
    <property type="entry name" value="UBQ"/>
    <property type="match status" value="2"/>
</dbReference>
<dbReference type="SUPFAM" id="SSF54236">
    <property type="entry name" value="Ubiquitin-like"/>
    <property type="match status" value="2"/>
</dbReference>
<dbReference type="PROSITE" id="PS50053">
    <property type="entry name" value="UBIQUITIN_2"/>
    <property type="match status" value="2"/>
</dbReference>
<comment type="function">
    <text evidence="1 3 4 5 6 7 9">Ubiquitin-like protein modifier which can be covalently attached to target proteins and subsequently leads to their degradation by the 26S proteasome, in a NUB1-dependent manner. Conjugation to the target protein is activated by UBA6 via adenylation of its C-terminal glycine (By similarity). Probably functions as a survival factor. Promotes the expression of the proteasome subunit beta type-9 (PSMB9/LMP2). Regulates TNF-alpha-induced and LPS-mediated activation of the central mediator of innate immunity NF-kappa-B by promoting TNF-alpha-mediated proteasomal degradation of ubiquitinated-I-kappa-B-alpha. Required for TNF-alpha-induced p65 nuclear translocation in renal tubular epithelial cells (RTECs). May be involved in dendritic cell (DC) maturation, the process by which immature dendritic cells differentiate into fully competent antigen-presenting cells that initiate T-cell responses. Mediates mitotic non-disjunction and chromosome instability, in long-term in vitro culture and cancers, by abbreviating mitotic phase and impairing the kinetochore localization of MAD2L1 during the prometaphase stage of the cell cycle. May be involved in the formation of aggresomes when proteasome is saturated or impaired. Mediates apoptosis in a caspase-dependent manner, especially in renal epithelium and tubular cells during renal diseases.</text>
</comment>
<comment type="subunit">
    <text evidence="1 7">Interacts directly with the 26S proteasome (By similarity). Interacts with NUB1; this interaction facilitates the linking of UBD-conjugated target protein to the proteasome complex and accelerates its own degradation and that of its conjugates (By similarity). Interacts (via ubiquitin-like 1 domain) with the spindle checkpoint protein MAD2L1 during mitosis (By similarity). Present in aggresomes of proteasome inhibited cells (By similarity). Interacts with HDAC6 under proteasome impairment conditions (By similarity). Forms a thioester with UBA6 in cells stimulated with tumor necrosis factor-alpha (TNFa) and interferon-gamma (IFNg) (PubMed:17889673). Interacts with SQSTM1 and TP53/p53 (By similarity).</text>
</comment>
<comment type="subcellular location">
    <subcellularLocation>
        <location evidence="3">Nucleus</location>
    </subcellularLocation>
    <subcellularLocation>
        <location evidence="3">Cytoplasm</location>
    </subcellularLocation>
    <text>Accumulates in aggresomes under proteasome inhibition conditions.</text>
</comment>
<comment type="tissue specificity">
    <text evidence="6">Mostly expressed in thymus and intestine.</text>
</comment>
<comment type="induction">
    <text evidence="3 6 8">Rapidly degraded by the proteasome. Cell-cycle regulation with highest expression during the S-phase (at protein level). Over expressed in hepatocytes by drug injury (e.g. DDC; diethyl 1,4-dihydro-2,4,6-trimethyl-3,5-pyridinedicarboxylate). Inducible by the pro-inflammatory cytokines tumor necrosis factor-alpha (TNFa) and interferon-gamma (IFNg).</text>
</comment>
<comment type="PTM">
    <text evidence="1">Can be acetylated.</text>
</comment>
<comment type="disruption phenotype">
    <text evidence="6 9">Spontaneous sporadic apoptotic death. Higher sensitivity toward endotoxin challenge. Abrogated TNF-alpha-induced NF-kappa-B activation and reduced induction of NF-kappa-B-regulated genes. Impaired TNF-alpha-induced I-kappa-B-alpha degradation and nuclear translocation of p65 in RTECs. Reduced expression of LMP2.</text>
</comment>
<comment type="similarity">
    <text evidence="10">Belongs to the ubiquitin D family.</text>
</comment>
<organism>
    <name type="scientific">Mus musculus</name>
    <name type="common">Mouse</name>
    <dbReference type="NCBI Taxonomy" id="10090"/>
    <lineage>
        <taxon>Eukaryota</taxon>
        <taxon>Metazoa</taxon>
        <taxon>Chordata</taxon>
        <taxon>Craniata</taxon>
        <taxon>Vertebrata</taxon>
        <taxon>Euteleostomi</taxon>
        <taxon>Mammalia</taxon>
        <taxon>Eutheria</taxon>
        <taxon>Euarchontoglires</taxon>
        <taxon>Glires</taxon>
        <taxon>Rodentia</taxon>
        <taxon>Myomorpha</taxon>
        <taxon>Muroidea</taxon>
        <taxon>Muridae</taxon>
        <taxon>Murinae</taxon>
        <taxon>Mus</taxon>
        <taxon>Mus</taxon>
    </lineage>
</organism>
<name>UBD_MOUSE</name>
<keyword id="KW-0007">Acetylation</keyword>
<keyword id="KW-0963">Cytoplasm</keyword>
<keyword id="KW-0539">Nucleus</keyword>
<keyword id="KW-1185">Reference proteome</keyword>
<keyword id="KW-0677">Repeat</keyword>
<keyword id="KW-0833">Ubl conjugation pathway</keyword>
<feature type="chain" id="PRO_0000114894" description="Ubiquitin D">
    <location>
        <begin position="1"/>
        <end position="162"/>
    </location>
</feature>
<feature type="domain" description="Ubiquitin-like 1" evidence="2">
    <location>
        <begin position="3"/>
        <end position="78"/>
    </location>
</feature>
<feature type="domain" description="Ubiquitin-like 2" evidence="2">
    <location>
        <begin position="87"/>
        <end position="160"/>
    </location>
</feature>
<feature type="site" description="Activation by thioester intermediate formation with UBA6">
    <location>
        <begin position="161"/>
        <end position="162"/>
    </location>
</feature>
<feature type="mutagenesis site" description="Impaired conjugation of target proteins." evidence="3">
    <location>
        <begin position="161"/>
        <end position="162"/>
    </location>
</feature>
<gene>
    <name type="primary">Ubd</name>
    <name type="synonym">Fat10</name>
</gene>
<evidence type="ECO:0000250" key="1">
    <source>
        <dbReference type="UniProtKB" id="O15205"/>
    </source>
</evidence>
<evidence type="ECO:0000255" key="2">
    <source>
        <dbReference type="PROSITE-ProRule" id="PRU00214"/>
    </source>
</evidence>
<evidence type="ECO:0000269" key="3">
    <source>
    </source>
</evidence>
<evidence type="ECO:0000269" key="4">
    <source>
    </source>
</evidence>
<evidence type="ECO:0000269" key="5">
    <source>
    </source>
</evidence>
<evidence type="ECO:0000269" key="6">
    <source>
    </source>
</evidence>
<evidence type="ECO:0000269" key="7">
    <source>
    </source>
</evidence>
<evidence type="ECO:0000269" key="8">
    <source>
    </source>
</evidence>
<evidence type="ECO:0000269" key="9">
    <source>
    </source>
</evidence>
<evidence type="ECO:0000305" key="10"/>
<reference key="1">
    <citation type="submission" date="2000-10" db="EMBL/GenBank/DDBJ databases">
        <title>Disruption of the mouse Fat10 gene by gene targeting in the mouse embryonic stem cells.</title>
        <authorList>
            <person name="Yu X."/>
            <person name="Liu Y."/>
            <person name="Weissman S.M."/>
        </authorList>
    </citation>
    <scope>NUCLEOTIDE SEQUENCE [GENOMIC DNA]</scope>
</reference>
<reference key="2">
    <citation type="journal article" date="2005" name="Science">
        <title>The transcriptional landscape of the mammalian genome.</title>
        <authorList>
            <person name="Carninci P."/>
            <person name="Kasukawa T."/>
            <person name="Katayama S."/>
            <person name="Gough J."/>
            <person name="Frith M.C."/>
            <person name="Maeda N."/>
            <person name="Oyama R."/>
            <person name="Ravasi T."/>
            <person name="Lenhard B."/>
            <person name="Wells C."/>
            <person name="Kodzius R."/>
            <person name="Shimokawa K."/>
            <person name="Bajic V.B."/>
            <person name="Brenner S.E."/>
            <person name="Batalov S."/>
            <person name="Forrest A.R."/>
            <person name="Zavolan M."/>
            <person name="Davis M.J."/>
            <person name="Wilming L.G."/>
            <person name="Aidinis V."/>
            <person name="Allen J.E."/>
            <person name="Ambesi-Impiombato A."/>
            <person name="Apweiler R."/>
            <person name="Aturaliya R.N."/>
            <person name="Bailey T.L."/>
            <person name="Bansal M."/>
            <person name="Baxter L."/>
            <person name="Beisel K.W."/>
            <person name="Bersano T."/>
            <person name="Bono H."/>
            <person name="Chalk A.M."/>
            <person name="Chiu K.P."/>
            <person name="Choudhary V."/>
            <person name="Christoffels A."/>
            <person name="Clutterbuck D.R."/>
            <person name="Crowe M.L."/>
            <person name="Dalla E."/>
            <person name="Dalrymple B.P."/>
            <person name="de Bono B."/>
            <person name="Della Gatta G."/>
            <person name="di Bernardo D."/>
            <person name="Down T."/>
            <person name="Engstrom P."/>
            <person name="Fagiolini M."/>
            <person name="Faulkner G."/>
            <person name="Fletcher C.F."/>
            <person name="Fukushima T."/>
            <person name="Furuno M."/>
            <person name="Futaki S."/>
            <person name="Gariboldi M."/>
            <person name="Georgii-Hemming P."/>
            <person name="Gingeras T.R."/>
            <person name="Gojobori T."/>
            <person name="Green R.E."/>
            <person name="Gustincich S."/>
            <person name="Harbers M."/>
            <person name="Hayashi Y."/>
            <person name="Hensch T.K."/>
            <person name="Hirokawa N."/>
            <person name="Hill D."/>
            <person name="Huminiecki L."/>
            <person name="Iacono M."/>
            <person name="Ikeo K."/>
            <person name="Iwama A."/>
            <person name="Ishikawa T."/>
            <person name="Jakt M."/>
            <person name="Kanapin A."/>
            <person name="Katoh M."/>
            <person name="Kawasawa Y."/>
            <person name="Kelso J."/>
            <person name="Kitamura H."/>
            <person name="Kitano H."/>
            <person name="Kollias G."/>
            <person name="Krishnan S.P."/>
            <person name="Kruger A."/>
            <person name="Kummerfeld S.K."/>
            <person name="Kurochkin I.V."/>
            <person name="Lareau L.F."/>
            <person name="Lazarevic D."/>
            <person name="Lipovich L."/>
            <person name="Liu J."/>
            <person name="Liuni S."/>
            <person name="McWilliam S."/>
            <person name="Madan Babu M."/>
            <person name="Madera M."/>
            <person name="Marchionni L."/>
            <person name="Matsuda H."/>
            <person name="Matsuzawa S."/>
            <person name="Miki H."/>
            <person name="Mignone F."/>
            <person name="Miyake S."/>
            <person name="Morris K."/>
            <person name="Mottagui-Tabar S."/>
            <person name="Mulder N."/>
            <person name="Nakano N."/>
            <person name="Nakauchi H."/>
            <person name="Ng P."/>
            <person name="Nilsson R."/>
            <person name="Nishiguchi S."/>
            <person name="Nishikawa S."/>
            <person name="Nori F."/>
            <person name="Ohara O."/>
            <person name="Okazaki Y."/>
            <person name="Orlando V."/>
            <person name="Pang K.C."/>
            <person name="Pavan W.J."/>
            <person name="Pavesi G."/>
            <person name="Pesole G."/>
            <person name="Petrovsky N."/>
            <person name="Piazza S."/>
            <person name="Reed J."/>
            <person name="Reid J.F."/>
            <person name="Ring B.Z."/>
            <person name="Ringwald M."/>
            <person name="Rost B."/>
            <person name="Ruan Y."/>
            <person name="Salzberg S.L."/>
            <person name="Sandelin A."/>
            <person name="Schneider C."/>
            <person name="Schoenbach C."/>
            <person name="Sekiguchi K."/>
            <person name="Semple C.A."/>
            <person name="Seno S."/>
            <person name="Sessa L."/>
            <person name="Sheng Y."/>
            <person name="Shibata Y."/>
            <person name="Shimada H."/>
            <person name="Shimada K."/>
            <person name="Silva D."/>
            <person name="Sinclair B."/>
            <person name="Sperling S."/>
            <person name="Stupka E."/>
            <person name="Sugiura K."/>
            <person name="Sultana R."/>
            <person name="Takenaka Y."/>
            <person name="Taki K."/>
            <person name="Tammoja K."/>
            <person name="Tan S.L."/>
            <person name="Tang S."/>
            <person name="Taylor M.S."/>
            <person name="Tegner J."/>
            <person name="Teichmann S.A."/>
            <person name="Ueda H.R."/>
            <person name="van Nimwegen E."/>
            <person name="Verardo R."/>
            <person name="Wei C.L."/>
            <person name="Yagi K."/>
            <person name="Yamanishi H."/>
            <person name="Zabarovsky E."/>
            <person name="Zhu S."/>
            <person name="Zimmer A."/>
            <person name="Hide W."/>
            <person name="Bult C."/>
            <person name="Grimmond S.M."/>
            <person name="Teasdale R.D."/>
            <person name="Liu E.T."/>
            <person name="Brusic V."/>
            <person name="Quackenbush J."/>
            <person name="Wahlestedt C."/>
            <person name="Mattick J.S."/>
            <person name="Hume D.A."/>
            <person name="Kai C."/>
            <person name="Sasaki D."/>
            <person name="Tomaru Y."/>
            <person name="Fukuda S."/>
            <person name="Kanamori-Katayama M."/>
            <person name="Suzuki M."/>
            <person name="Aoki J."/>
            <person name="Arakawa T."/>
            <person name="Iida J."/>
            <person name="Imamura K."/>
            <person name="Itoh M."/>
            <person name="Kato T."/>
            <person name="Kawaji H."/>
            <person name="Kawagashira N."/>
            <person name="Kawashima T."/>
            <person name="Kojima M."/>
            <person name="Kondo S."/>
            <person name="Konno H."/>
            <person name="Nakano K."/>
            <person name="Ninomiya N."/>
            <person name="Nishio T."/>
            <person name="Okada M."/>
            <person name="Plessy C."/>
            <person name="Shibata K."/>
            <person name="Shiraki T."/>
            <person name="Suzuki S."/>
            <person name="Tagami M."/>
            <person name="Waki K."/>
            <person name="Watahiki A."/>
            <person name="Okamura-Oho Y."/>
            <person name="Suzuki H."/>
            <person name="Kawai J."/>
            <person name="Hayashizaki Y."/>
        </authorList>
    </citation>
    <scope>NUCLEOTIDE SEQUENCE [LARGE SCALE MRNA]</scope>
    <source>
        <strain>C57BL/6J</strain>
        <tissue>Small intestine</tissue>
    </source>
</reference>
<reference key="3">
    <citation type="submission" date="2005-07" db="EMBL/GenBank/DDBJ databases">
        <title>Cloning of mouse full open reading frames in Gateway(R) system entry vector (pDONR201).</title>
        <authorList>
            <person name="Ebert L."/>
            <person name="Muenstermann E."/>
            <person name="Schatten R."/>
            <person name="Henze S."/>
            <person name="Bohn E."/>
            <person name="Mollenhauer J."/>
            <person name="Wiemann S."/>
            <person name="Schick M."/>
            <person name="Korn B."/>
        </authorList>
    </citation>
    <scope>NUCLEOTIDE SEQUENCE [LARGE SCALE MRNA]</scope>
</reference>
<reference key="4">
    <citation type="journal article" date="2009" name="PLoS Biol.">
        <title>Lineage-specific biology revealed by a finished genome assembly of the mouse.</title>
        <authorList>
            <person name="Church D.M."/>
            <person name="Goodstadt L."/>
            <person name="Hillier L.W."/>
            <person name="Zody M.C."/>
            <person name="Goldstein S."/>
            <person name="She X."/>
            <person name="Bult C.J."/>
            <person name="Agarwala R."/>
            <person name="Cherry J.L."/>
            <person name="DiCuccio M."/>
            <person name="Hlavina W."/>
            <person name="Kapustin Y."/>
            <person name="Meric P."/>
            <person name="Maglott D."/>
            <person name="Birtle Z."/>
            <person name="Marques A.C."/>
            <person name="Graves T."/>
            <person name="Zhou S."/>
            <person name="Teague B."/>
            <person name="Potamousis K."/>
            <person name="Churas C."/>
            <person name="Place M."/>
            <person name="Herschleb J."/>
            <person name="Runnheim R."/>
            <person name="Forrest D."/>
            <person name="Amos-Landgraf J."/>
            <person name="Schwartz D.C."/>
            <person name="Cheng Z."/>
            <person name="Lindblad-Toh K."/>
            <person name="Eichler E.E."/>
            <person name="Ponting C.P."/>
        </authorList>
    </citation>
    <scope>NUCLEOTIDE SEQUENCE [LARGE SCALE GENOMIC DNA]</scope>
    <source>
        <strain>C57BL/6J</strain>
    </source>
</reference>
<reference key="5">
    <citation type="journal article" date="2004" name="Genome Res.">
        <title>The status, quality, and expansion of the NIH full-length cDNA project: the Mammalian Gene Collection (MGC).</title>
        <authorList>
            <consortium name="The MGC Project Team"/>
        </authorList>
    </citation>
    <scope>NUCLEOTIDE SEQUENCE [LARGE SCALE MRNA]</scope>
    <source>
        <strain>C57BL/6J</strain>
        <tissue>Mammary gland</tissue>
    </source>
</reference>
<reference key="6">
    <citation type="journal article" date="2001" name="J. Biol. Chem.">
        <title>The ubiquitin-like protein FAT10 forms covalent conjugates and induces apoptosis.</title>
        <authorList>
            <person name="Raasi S."/>
            <person name="Schmidtke G."/>
            <person name="Groettrup M."/>
        </authorList>
    </citation>
    <scope>FUNCTION</scope>
    <scope>SUBCELLULAR LOCATION</scope>
    <scope>INDUCTION</scope>
    <scope>MUTAGENESIS OF 161-GLY-GLY-162</scope>
</reference>
<reference key="7">
    <citation type="journal article" date="2005" name="Mol. Cell. Biol.">
        <title>FAT10, a ubiquitin-independent signal for proteasomal degradation.</title>
        <authorList>
            <person name="Hipp M.S."/>
            <person name="Kalveram B."/>
            <person name="Raasi S."/>
            <person name="Groettrup M."/>
            <person name="Schmidtke G."/>
        </authorList>
    </citation>
    <scope>FUNCTION</scope>
</reference>
<reference key="8">
    <citation type="journal article" date="2006" name="J. Am. Soc. Nephrol.">
        <title>Role of ubiquitin-like protein FAT10 in epithelial apoptosis in renal disease.</title>
        <authorList>
            <person name="Ross M.J."/>
            <person name="Wosnitzer M.S."/>
            <person name="Ross M.D."/>
            <person name="Granelli B."/>
            <person name="Gusella G.L."/>
            <person name="Husain M."/>
            <person name="Kaufman L."/>
            <person name="Vasievich M."/>
            <person name="D'Agati V.D."/>
            <person name="Wilson P.D."/>
            <person name="Klotman M.E."/>
            <person name="Klotman P.E."/>
        </authorList>
    </citation>
    <scope>FUNCTION</scope>
</reference>
<reference key="9">
    <citation type="journal article" date="2006" name="Mol. Cell. Biol.">
        <title>FAT10/diubiquitin-like protein-deficient mice exhibit minimal phenotypic differences.</title>
        <authorList>
            <person name="Canaan A."/>
            <person name="Yu X."/>
            <person name="Booth C.J."/>
            <person name="Lian J."/>
            <person name="Lazar I."/>
            <person name="Gamfi S.L."/>
            <person name="Castille K."/>
            <person name="Kohya N."/>
            <person name="Nakayama Y."/>
            <person name="Liu Y.-C."/>
            <person name="Eynon E."/>
            <person name="Flavell R."/>
            <person name="Weissman S.M."/>
        </authorList>
    </citation>
    <scope>FUNCTION</scope>
    <scope>INDUCTION BY TNFA AND IFNG</scope>
    <scope>DISRUPTION PHENOTYPE</scope>
    <scope>TISSUE SPECIFICITY</scope>
</reference>
<reference key="10">
    <citation type="journal article" date="2007" name="Mol. Cell">
        <title>E1-L2 activates both ubiquitin and FAT10.</title>
        <authorList>
            <person name="Chiu Y.-H."/>
            <person name="Sun Q."/>
            <person name="Chen Z.J."/>
        </authorList>
    </citation>
    <scope>FUNCTION</scope>
    <scope>INTERACTION WITH UBA6</scope>
</reference>
<reference key="11">
    <citation type="journal article" date="2008" name="Exp. Mol. Pathol.">
        <title>Fat10 is an epigenetic marker for liver preneoplasia in a drug-primed mouse model of tumorigenesis.</title>
        <authorList>
            <person name="Oliva J."/>
            <person name="Bardag-Gorce F."/>
            <person name="French B.A."/>
            <person name="Li J."/>
            <person name="McPhaul L."/>
            <person name="Amidi F."/>
            <person name="Dedes J."/>
            <person name="Habibi A."/>
            <person name="Nguyen S."/>
            <person name="French S.W."/>
        </authorList>
    </citation>
    <scope>INDUCTION BY DRUG INJURY</scope>
</reference>
<reference key="12">
    <citation type="journal article" date="2010" name="J. Am. Soc. Nephrol.">
        <title>The ubiquitin-like protein FAT10 mediates NF-kappa-B activation.</title>
        <authorList>
            <person name="Gong P."/>
            <person name="Canaan A."/>
            <person name="Wang B."/>
            <person name="Leventhal J."/>
            <person name="Snyder A."/>
            <person name="Nair V."/>
            <person name="Cohen C.D."/>
            <person name="Kretzler M."/>
            <person name="D'Agati V."/>
            <person name="Weissman S."/>
            <person name="Ross M.J."/>
        </authorList>
    </citation>
    <scope>FUNCTION</scope>
    <scope>DISRUPTION PHENOTYPE</scope>
</reference>